<sequence>MNTPMSLSAARGRMLPFLEKEKSEEESETLESSLLQLIDDNRRSSLQLREKTERSRKEAIRHAARTADLLVKAVNGGVEECFVNEKRIESEIRNLAITVAKFGKQTDQWLAVTHAVNSAVKEIGDFENWMKTMEFDCKKITAAIRNIHEDQQ</sequence>
<evidence type="ECO:0000250" key="1"/>
<evidence type="ECO:0000269" key="2">
    <source>
    </source>
</evidence>
<evidence type="ECO:0000305" key="3"/>
<gene>
    <name type="primary">BLOS1</name>
    <name type="synonym">GCN5L1</name>
    <name type="ordered locus">At2g30330</name>
    <name type="ORF">T09D09.14</name>
</gene>
<name>BL1S1_ARATH</name>
<organism>
    <name type="scientific">Arabidopsis thaliana</name>
    <name type="common">Mouse-ear cress</name>
    <dbReference type="NCBI Taxonomy" id="3702"/>
    <lineage>
        <taxon>Eukaryota</taxon>
        <taxon>Viridiplantae</taxon>
        <taxon>Streptophyta</taxon>
        <taxon>Embryophyta</taxon>
        <taxon>Tracheophyta</taxon>
        <taxon>Spermatophyta</taxon>
        <taxon>Magnoliopsida</taxon>
        <taxon>eudicotyledons</taxon>
        <taxon>Gunneridae</taxon>
        <taxon>Pentapetalae</taxon>
        <taxon>rosids</taxon>
        <taxon>malvids</taxon>
        <taxon>Brassicales</taxon>
        <taxon>Brassicaceae</taxon>
        <taxon>Camelineae</taxon>
        <taxon>Arabidopsis</taxon>
    </lineage>
</organism>
<protein>
    <recommendedName>
        <fullName>Biogenesis of lysosome-related organelles complex 1 subunit 1</fullName>
        <shortName>BLOC-1 subunit 1</shortName>
    </recommendedName>
    <alternativeName>
        <fullName>GCN5-like protein 1</fullName>
    </alternativeName>
    <alternativeName>
        <fullName>Protein RT14 homolog</fullName>
    </alternativeName>
</protein>
<keyword id="KW-0963">Cytoplasm</keyword>
<keyword id="KW-0967">Endosome</keyword>
<keyword id="KW-1185">Reference proteome</keyword>
<feature type="chain" id="PRO_0000156334" description="Biogenesis of lysosome-related organelles complex 1 subunit 1">
    <location>
        <begin position="1"/>
        <end position="152"/>
    </location>
</feature>
<comment type="function">
    <text evidence="2">Component of the biogenesis of lysosome-related organelles complex-1 (BLOC-1), a complex that mediates the vacuolar degradative transport via the intracellular vesicle trafficking from the endosome to the vacuole. Probably regulates the PIN1 and PIN2 homeostasis through its interaction with SNX1.</text>
</comment>
<comment type="subunit">
    <text evidence="1 2">Component of the biogenesis of lysosome-related organelles complex-1 (BLOC-1) (By similarity). Interacts with BLOS2 and SNX1.</text>
</comment>
<comment type="interaction">
    <interactant intactId="EBI-4406998">
        <id>O22929</id>
    </interactant>
    <interactant intactId="EBI-1543026">
        <id>Q9FG38</id>
        <label>SNX1</label>
    </interactant>
    <organismsDiffer>false</organismsDiffer>
    <experiments>5</experiments>
</comment>
<comment type="subcellular location">
    <subcellularLocation>
        <location evidence="1">Cytoplasm</location>
    </subcellularLocation>
    <subcellularLocation>
        <location evidence="2">Endosome</location>
    </subcellularLocation>
</comment>
<comment type="tissue specificity">
    <text evidence="2">Expressed in the whole plant (at protein level).</text>
</comment>
<comment type="disruption phenotype">
    <text evidence="2">Longer primary roots and more lateral roots in the RNAi mutant.</text>
</comment>
<comment type="similarity">
    <text evidence="3">Belongs to the BLOC1S1 family.</text>
</comment>
<proteinExistence type="evidence at protein level"/>
<accession>O22929</accession>
<accession>Q0WNC8</accession>
<dbReference type="EMBL" id="AC002338">
    <property type="protein sequence ID" value="AAC16935.1"/>
    <property type="molecule type" value="Genomic_DNA"/>
</dbReference>
<dbReference type="EMBL" id="CP002685">
    <property type="protein sequence ID" value="AEC08371.1"/>
    <property type="molecule type" value="Genomic_DNA"/>
</dbReference>
<dbReference type="EMBL" id="BT008561">
    <property type="protein sequence ID" value="AAP40388.1"/>
    <property type="molecule type" value="mRNA"/>
</dbReference>
<dbReference type="EMBL" id="BT008702">
    <property type="protein sequence ID" value="AAP40508.1"/>
    <property type="molecule type" value="mRNA"/>
</dbReference>
<dbReference type="EMBL" id="AK229517">
    <property type="protein sequence ID" value="BAF01372.1"/>
    <property type="molecule type" value="mRNA"/>
</dbReference>
<dbReference type="PIR" id="B84707">
    <property type="entry name" value="B84707"/>
</dbReference>
<dbReference type="RefSeq" id="NP_180592.1">
    <property type="nucleotide sequence ID" value="NM_128586.3"/>
</dbReference>
<dbReference type="SMR" id="O22929"/>
<dbReference type="BioGRID" id="2932">
    <property type="interactions" value="6"/>
</dbReference>
<dbReference type="FunCoup" id="O22929">
    <property type="interactions" value="1409"/>
</dbReference>
<dbReference type="IntAct" id="O22929">
    <property type="interactions" value="3"/>
</dbReference>
<dbReference type="STRING" id="3702.O22929"/>
<dbReference type="PaxDb" id="3702-AT2G30330.1"/>
<dbReference type="ProteomicsDB" id="240770"/>
<dbReference type="EnsemblPlants" id="AT2G30330.1">
    <property type="protein sequence ID" value="AT2G30330.1"/>
    <property type="gene ID" value="AT2G30330"/>
</dbReference>
<dbReference type="GeneID" id="817583"/>
<dbReference type="Gramene" id="AT2G30330.1">
    <property type="protein sequence ID" value="AT2G30330.1"/>
    <property type="gene ID" value="AT2G30330"/>
</dbReference>
<dbReference type="KEGG" id="ath:AT2G30330"/>
<dbReference type="Araport" id="AT2G30330"/>
<dbReference type="TAIR" id="AT2G30330">
    <property type="gene designation" value="BLOS1"/>
</dbReference>
<dbReference type="eggNOG" id="KOG3390">
    <property type="taxonomic scope" value="Eukaryota"/>
</dbReference>
<dbReference type="HOGENOM" id="CLU_115602_2_0_1"/>
<dbReference type="InParanoid" id="O22929"/>
<dbReference type="OMA" id="WMKIMEY"/>
<dbReference type="OrthoDB" id="20018at2759"/>
<dbReference type="PhylomeDB" id="O22929"/>
<dbReference type="PRO" id="PR:O22929"/>
<dbReference type="Proteomes" id="UP000006548">
    <property type="component" value="Chromosome 2"/>
</dbReference>
<dbReference type="ExpressionAtlas" id="O22929">
    <property type="expression patterns" value="baseline and differential"/>
</dbReference>
<dbReference type="GO" id="GO:0031083">
    <property type="term" value="C:BLOC-1 complex"/>
    <property type="evidence" value="ECO:0000304"/>
    <property type="project" value="UniProtKB"/>
</dbReference>
<dbReference type="GO" id="GO:0005768">
    <property type="term" value="C:endosome"/>
    <property type="evidence" value="ECO:0000314"/>
    <property type="project" value="TAIR"/>
</dbReference>
<dbReference type="GO" id="GO:0016197">
    <property type="term" value="P:endosomal transport"/>
    <property type="evidence" value="ECO:0000304"/>
    <property type="project" value="TAIR"/>
</dbReference>
<dbReference type="GO" id="GO:0045324">
    <property type="term" value="P:late endosome to vacuole transport"/>
    <property type="evidence" value="ECO:0000304"/>
    <property type="project" value="UniProtKB"/>
</dbReference>
<dbReference type="GO" id="GO:0048364">
    <property type="term" value="P:root development"/>
    <property type="evidence" value="ECO:0000315"/>
    <property type="project" value="UniProtKB"/>
</dbReference>
<dbReference type="InterPro" id="IPR009395">
    <property type="entry name" value="BLOC1S1"/>
</dbReference>
<dbReference type="PANTHER" id="PTHR13073:SF0">
    <property type="entry name" value="BIOGENESIS OF LYSOSOME-RELATED ORGANELLES COMPLEX 1 SUBUNIT 1"/>
    <property type="match status" value="1"/>
</dbReference>
<dbReference type="PANTHER" id="PTHR13073">
    <property type="entry name" value="BLOC-1 COMPLEX SUBUNIT 1"/>
    <property type="match status" value="1"/>
</dbReference>
<dbReference type="Pfam" id="PF06320">
    <property type="entry name" value="GCN5L1"/>
    <property type="match status" value="1"/>
</dbReference>
<reference key="1">
    <citation type="journal article" date="1999" name="Nature">
        <title>Sequence and analysis of chromosome 2 of the plant Arabidopsis thaliana.</title>
        <authorList>
            <person name="Lin X."/>
            <person name="Kaul S."/>
            <person name="Rounsley S.D."/>
            <person name="Shea T.P."/>
            <person name="Benito M.-I."/>
            <person name="Town C.D."/>
            <person name="Fujii C.Y."/>
            <person name="Mason T.M."/>
            <person name="Bowman C.L."/>
            <person name="Barnstead M.E."/>
            <person name="Feldblyum T.V."/>
            <person name="Buell C.R."/>
            <person name="Ketchum K.A."/>
            <person name="Lee J.J."/>
            <person name="Ronning C.M."/>
            <person name="Koo H.L."/>
            <person name="Moffat K.S."/>
            <person name="Cronin L.A."/>
            <person name="Shen M."/>
            <person name="Pai G."/>
            <person name="Van Aken S."/>
            <person name="Umayam L."/>
            <person name="Tallon L.J."/>
            <person name="Gill J.E."/>
            <person name="Adams M.D."/>
            <person name="Carrera A.J."/>
            <person name="Creasy T.H."/>
            <person name="Goodman H.M."/>
            <person name="Somerville C.R."/>
            <person name="Copenhaver G.P."/>
            <person name="Preuss D."/>
            <person name="Nierman W.C."/>
            <person name="White O."/>
            <person name="Eisen J.A."/>
            <person name="Salzberg S.L."/>
            <person name="Fraser C.M."/>
            <person name="Venter J.C."/>
        </authorList>
    </citation>
    <scope>NUCLEOTIDE SEQUENCE [LARGE SCALE GENOMIC DNA]</scope>
    <source>
        <strain>cv. Columbia</strain>
    </source>
</reference>
<reference key="2">
    <citation type="journal article" date="2017" name="Plant J.">
        <title>Araport11: a complete reannotation of the Arabidopsis thaliana reference genome.</title>
        <authorList>
            <person name="Cheng C.Y."/>
            <person name="Krishnakumar V."/>
            <person name="Chan A.P."/>
            <person name="Thibaud-Nissen F."/>
            <person name="Schobel S."/>
            <person name="Town C.D."/>
        </authorList>
    </citation>
    <scope>GENOME REANNOTATION</scope>
    <source>
        <strain>cv. Columbia</strain>
    </source>
</reference>
<reference key="3">
    <citation type="journal article" date="2003" name="Science">
        <title>Empirical analysis of transcriptional activity in the Arabidopsis genome.</title>
        <authorList>
            <person name="Yamada K."/>
            <person name="Lim J."/>
            <person name="Dale J.M."/>
            <person name="Chen H."/>
            <person name="Shinn P."/>
            <person name="Palm C.J."/>
            <person name="Southwick A.M."/>
            <person name="Wu H.C."/>
            <person name="Kim C.J."/>
            <person name="Nguyen M."/>
            <person name="Pham P.K."/>
            <person name="Cheuk R.F."/>
            <person name="Karlin-Newmann G."/>
            <person name="Liu S.X."/>
            <person name="Lam B."/>
            <person name="Sakano H."/>
            <person name="Wu T."/>
            <person name="Yu G."/>
            <person name="Miranda M."/>
            <person name="Quach H.L."/>
            <person name="Tripp M."/>
            <person name="Chang C.H."/>
            <person name="Lee J.M."/>
            <person name="Toriumi M.J."/>
            <person name="Chan M.M."/>
            <person name="Tang C.C."/>
            <person name="Onodera C.S."/>
            <person name="Deng J.M."/>
            <person name="Akiyama K."/>
            <person name="Ansari Y."/>
            <person name="Arakawa T."/>
            <person name="Banh J."/>
            <person name="Banno F."/>
            <person name="Bowser L."/>
            <person name="Brooks S.Y."/>
            <person name="Carninci P."/>
            <person name="Chao Q."/>
            <person name="Choy N."/>
            <person name="Enju A."/>
            <person name="Goldsmith A.D."/>
            <person name="Gurjal M."/>
            <person name="Hansen N.F."/>
            <person name="Hayashizaki Y."/>
            <person name="Johnson-Hopson C."/>
            <person name="Hsuan V.W."/>
            <person name="Iida K."/>
            <person name="Karnes M."/>
            <person name="Khan S."/>
            <person name="Koesema E."/>
            <person name="Ishida J."/>
            <person name="Jiang P.X."/>
            <person name="Jones T."/>
            <person name="Kawai J."/>
            <person name="Kamiya A."/>
            <person name="Meyers C."/>
            <person name="Nakajima M."/>
            <person name="Narusaka M."/>
            <person name="Seki M."/>
            <person name="Sakurai T."/>
            <person name="Satou M."/>
            <person name="Tamse R."/>
            <person name="Vaysberg M."/>
            <person name="Wallender E.K."/>
            <person name="Wong C."/>
            <person name="Yamamura Y."/>
            <person name="Yuan S."/>
            <person name="Shinozaki K."/>
            <person name="Davis R.W."/>
            <person name="Theologis A."/>
            <person name="Ecker J.R."/>
        </authorList>
    </citation>
    <scope>NUCLEOTIDE SEQUENCE [LARGE SCALE MRNA]</scope>
    <source>
        <strain>cv. Columbia</strain>
    </source>
</reference>
<reference key="4">
    <citation type="submission" date="2006-07" db="EMBL/GenBank/DDBJ databases">
        <title>Large-scale analysis of RIKEN Arabidopsis full-length (RAFL) cDNAs.</title>
        <authorList>
            <person name="Totoki Y."/>
            <person name="Seki M."/>
            <person name="Ishida J."/>
            <person name="Nakajima M."/>
            <person name="Enju A."/>
            <person name="Kamiya A."/>
            <person name="Narusaka M."/>
            <person name="Shin-i T."/>
            <person name="Nakagawa M."/>
            <person name="Sakamoto N."/>
            <person name="Oishi K."/>
            <person name="Kohara Y."/>
            <person name="Kobayashi M."/>
            <person name="Toyoda A."/>
            <person name="Sakaki Y."/>
            <person name="Sakurai T."/>
            <person name="Iida K."/>
            <person name="Akiyama K."/>
            <person name="Satou M."/>
            <person name="Toyoda T."/>
            <person name="Konagaya A."/>
            <person name="Carninci P."/>
            <person name="Kawai J."/>
            <person name="Hayashizaki Y."/>
            <person name="Shinozaki K."/>
        </authorList>
    </citation>
    <scope>NUCLEOTIDE SEQUENCE [LARGE SCALE MRNA]</scope>
    <source>
        <strain>cv. Columbia</strain>
    </source>
</reference>
<reference key="5">
    <citation type="journal article" date="2010" name="J. Cell Sci.">
        <title>BLOS1, a putative BLOC-1 subunit, interacts with SNX1 and modulates root growth in Arabidopsis.</title>
        <authorList>
            <person name="Cui Y."/>
            <person name="Li X."/>
            <person name="Chen Q."/>
            <person name="He X."/>
            <person name="Yang Q."/>
            <person name="Zhang A."/>
            <person name="Yu X."/>
            <person name="Chen H."/>
            <person name="Liu N."/>
            <person name="Xie Q."/>
            <person name="Yang W."/>
            <person name="Zuo J."/>
            <person name="Palme K."/>
            <person name="Li W."/>
        </authorList>
    </citation>
    <scope>IDENTIFICATION IN THE BLOC-1 COMPLEX</scope>
    <scope>FUNCTION</scope>
    <scope>INTERACTION WITH BLOS2 AND SNX1</scope>
    <scope>SUBCELLULAR LOCATION</scope>
    <scope>TISSUE SPECIFICITY</scope>
    <scope>DISRUPTION PHENOTYPE</scope>
</reference>